<reference key="1">
    <citation type="journal article" date="1994" name="Gene">
        <title>Genomic sequences encoding the acidic and basic subunits of Mojave toxin: unusually high sequence identity of non-coding regions.</title>
        <authorList>
            <person name="John T.R."/>
            <person name="Smith L.A."/>
            <person name="Kaiser I.I."/>
        </authorList>
    </citation>
    <scope>NUCLEOTIDE SEQUENCE [GENOMIC DNA]</scope>
    <source>
        <tissue>Liver</tissue>
    </source>
</reference>
<reference key="2">
    <citation type="journal article" date="1990" name="Biochim. Biophys. Acta">
        <title>The complete sequence of the acidic subunit from Mojave toxin determined by Edman degradation and mass spectrometry.</title>
        <authorList>
            <person name="Bieber A.L."/>
            <person name="Becker R.R."/>
            <person name="McParland R."/>
            <person name="Hunt D.F."/>
            <person name="Shabanowitz J."/>
            <person name="Yates J.R. III"/>
            <person name="Martino P.A."/>
            <person name="Johnson G.R."/>
        </authorList>
    </citation>
    <scope>PROTEIN SEQUENCE OF 41-80; 84-119 AND 127-138</scope>
    <scope>SUBCELLULAR LOCATION</scope>
    <scope>PYROGLUTAMATE FORMATION AT GLN-84</scope>
    <source>
        <tissue>Venom</tissue>
    </source>
</reference>
<reference key="3">
    <citation type="journal article" date="1989" name="Toxicon">
        <title>Studies of the sequence of Mojave toxin: the acidic subunit.</title>
        <authorList>
            <person name="Bieber A.L."/>
            <person name="Becker R.R."/>
            <person name="McParland R."/>
            <person name="Hunt D.F."/>
            <person name="Shabanowitz J."/>
            <person name="Yates J.R. III"/>
            <person name="Johnson G.R."/>
        </authorList>
    </citation>
    <scope>PRELIMINARY PROTEIN SEQUENCE OF 41-80; 84-119 AND 127-138</scope>
    <source>
        <tissue>Venom</tissue>
    </source>
</reference>
<accession>P18998</accession>
<accession>Q90395</accession>
<comment type="function">
    <text>Snake venom phospholipase A2 (PLA2) that inhibits neuromuscular transmission by blocking acetylcholine release from the nerve termini.</text>
</comment>
<comment type="cofactor">
    <cofactor evidence="1">
        <name>Ca(2+)</name>
        <dbReference type="ChEBI" id="CHEBI:29108"/>
    </cofactor>
    <text evidence="1">Binds 1 Ca(2+) ion.</text>
</comment>
<comment type="subunit">
    <text>Heterodimer of an acidic and a basic chain. The acidic subunit is non-toxic, without enzymatic activity and comprises 3 peptides that are cross-linked by 5 disulfide bridges. The basic subunit is toxic, has phospholipase A2 activity and is composed of a single chain.</text>
</comment>
<comment type="subcellular location">
    <subcellularLocation>
        <location evidence="2">Secreted</location>
    </subcellularLocation>
</comment>
<comment type="tissue specificity">
    <text evidence="6">Expressed by the venom gland.</text>
</comment>
<comment type="similarity">
    <text evidence="5">Belongs to the phospholipase A2 family. Group II subfamily. D49 sub-subfamily.</text>
</comment>
<evidence type="ECO:0000250" key="1"/>
<evidence type="ECO:0000269" key="2">
    <source>
    </source>
</evidence>
<evidence type="ECO:0000269" key="3">
    <source ref="3"/>
</evidence>
<evidence type="ECO:0000303" key="4">
    <source>
    </source>
</evidence>
<evidence type="ECO:0000305" key="5"/>
<evidence type="ECO:0000305" key="6">
    <source>
    </source>
</evidence>
<sequence length="138" mass="15211">MRALWIVAVLLVGVEGSLVEFETLIMKIAGRSGISYYSSYGCYCGAGGQGWPQDASDRCCFEHDCCYAKLTGCDPTTDVYTYRQEDGEIVCGGDDPCGTQICECDKAAAICFRDSMNTYDYKYLRFSPENCQGESQPC</sequence>
<organism>
    <name type="scientific">Crotalus scutulatus scutulatus</name>
    <name type="common">Mojave rattlesnake</name>
    <dbReference type="NCBI Taxonomy" id="8738"/>
    <lineage>
        <taxon>Eukaryota</taxon>
        <taxon>Metazoa</taxon>
        <taxon>Chordata</taxon>
        <taxon>Craniata</taxon>
        <taxon>Vertebrata</taxon>
        <taxon>Euteleostomi</taxon>
        <taxon>Lepidosauria</taxon>
        <taxon>Squamata</taxon>
        <taxon>Bifurcata</taxon>
        <taxon>Unidentata</taxon>
        <taxon>Episquamata</taxon>
        <taxon>Toxicofera</taxon>
        <taxon>Serpentes</taxon>
        <taxon>Colubroidea</taxon>
        <taxon>Viperidae</taxon>
        <taxon>Crotalinae</taxon>
        <taxon>Crotalus</taxon>
    </lineage>
</organism>
<protein>
    <recommendedName>
        <fullName>Phospholipase A2 homolog mojave toxin acidic chain</fullName>
        <shortName>Mtx-a</shortName>
    </recommendedName>
    <component>
        <recommendedName>
            <fullName evidence="4">Mojave toxin acidic chain A</fullName>
        </recommendedName>
    </component>
    <component>
        <recommendedName>
            <fullName evidence="4">Mojave toxin acidic chain B</fullName>
        </recommendedName>
    </component>
    <component>
        <recommendedName>
            <fullName evidence="4">Mojave toxin acidic chain C</fullName>
        </recommendedName>
    </component>
</protein>
<proteinExistence type="evidence at protein level"/>
<name>PA2HA_CROSS</name>
<dbReference type="EMBL" id="U01026">
    <property type="protein sequence ID" value="AAC59673.1"/>
    <property type="molecule type" value="Genomic_DNA"/>
</dbReference>
<dbReference type="PIR" id="I51380">
    <property type="entry name" value="I51380"/>
</dbReference>
<dbReference type="SMR" id="P18998"/>
<dbReference type="GO" id="GO:0005576">
    <property type="term" value="C:extracellular region"/>
    <property type="evidence" value="ECO:0007669"/>
    <property type="project" value="UniProtKB-SubCell"/>
</dbReference>
<dbReference type="GO" id="GO:0005509">
    <property type="term" value="F:calcium ion binding"/>
    <property type="evidence" value="ECO:0007669"/>
    <property type="project" value="InterPro"/>
</dbReference>
<dbReference type="GO" id="GO:0047498">
    <property type="term" value="F:calcium-dependent phospholipase A2 activity"/>
    <property type="evidence" value="ECO:0007669"/>
    <property type="project" value="TreeGrafter"/>
</dbReference>
<dbReference type="GO" id="GO:0005543">
    <property type="term" value="F:phospholipid binding"/>
    <property type="evidence" value="ECO:0007669"/>
    <property type="project" value="TreeGrafter"/>
</dbReference>
<dbReference type="GO" id="GO:0090729">
    <property type="term" value="F:toxin activity"/>
    <property type="evidence" value="ECO:0007669"/>
    <property type="project" value="UniProtKB-KW"/>
</dbReference>
<dbReference type="GO" id="GO:0050482">
    <property type="term" value="P:arachidonate secretion"/>
    <property type="evidence" value="ECO:0007669"/>
    <property type="project" value="InterPro"/>
</dbReference>
<dbReference type="GO" id="GO:0016042">
    <property type="term" value="P:lipid catabolic process"/>
    <property type="evidence" value="ECO:0007669"/>
    <property type="project" value="InterPro"/>
</dbReference>
<dbReference type="GO" id="GO:0042130">
    <property type="term" value="P:negative regulation of T cell proliferation"/>
    <property type="evidence" value="ECO:0007669"/>
    <property type="project" value="TreeGrafter"/>
</dbReference>
<dbReference type="GO" id="GO:0006644">
    <property type="term" value="P:phospholipid metabolic process"/>
    <property type="evidence" value="ECO:0007669"/>
    <property type="project" value="InterPro"/>
</dbReference>
<dbReference type="CDD" id="cd00125">
    <property type="entry name" value="PLA2c"/>
    <property type="match status" value="1"/>
</dbReference>
<dbReference type="FunFam" id="1.20.90.10:FF:000001">
    <property type="entry name" value="Basic phospholipase A2 homolog"/>
    <property type="match status" value="1"/>
</dbReference>
<dbReference type="Gene3D" id="1.20.90.10">
    <property type="entry name" value="Phospholipase A2 domain"/>
    <property type="match status" value="1"/>
</dbReference>
<dbReference type="InterPro" id="IPR001211">
    <property type="entry name" value="PLipase_A2"/>
</dbReference>
<dbReference type="InterPro" id="IPR033112">
    <property type="entry name" value="PLipase_A2_Asp_AS"/>
</dbReference>
<dbReference type="InterPro" id="IPR016090">
    <property type="entry name" value="PLipase_A2_dom"/>
</dbReference>
<dbReference type="InterPro" id="IPR036444">
    <property type="entry name" value="PLipase_A2_dom_sf"/>
</dbReference>
<dbReference type="InterPro" id="IPR033113">
    <property type="entry name" value="PLipase_A2_His_AS"/>
</dbReference>
<dbReference type="PANTHER" id="PTHR11716">
    <property type="entry name" value="PHOSPHOLIPASE A2 FAMILY MEMBER"/>
    <property type="match status" value="1"/>
</dbReference>
<dbReference type="PANTHER" id="PTHR11716:SF9">
    <property type="entry name" value="PHOSPHOLIPASE A2, MEMBRANE ASSOCIATED"/>
    <property type="match status" value="1"/>
</dbReference>
<dbReference type="Pfam" id="PF00068">
    <property type="entry name" value="Phospholip_A2_1"/>
    <property type="match status" value="1"/>
</dbReference>
<dbReference type="PRINTS" id="PR00389">
    <property type="entry name" value="PHPHLIPASEA2"/>
</dbReference>
<dbReference type="SMART" id="SM00085">
    <property type="entry name" value="PA2c"/>
    <property type="match status" value="1"/>
</dbReference>
<dbReference type="SUPFAM" id="SSF48619">
    <property type="entry name" value="Phospholipase A2, PLA2"/>
    <property type="match status" value="1"/>
</dbReference>
<dbReference type="PROSITE" id="PS00119">
    <property type="entry name" value="PA2_ASP"/>
    <property type="match status" value="1"/>
</dbReference>
<dbReference type="PROSITE" id="PS00118">
    <property type="entry name" value="PA2_HIS"/>
    <property type="match status" value="1"/>
</dbReference>
<feature type="signal peptide" evidence="6">
    <location>
        <begin position="1"/>
        <end position="40"/>
    </location>
</feature>
<feature type="chain" id="PRO_0000022863" description="Mojave toxin acidic chain A" evidence="2 3">
    <location>
        <begin position="41"/>
        <end position="80"/>
    </location>
</feature>
<feature type="propeptide" id="PRO_0000022864" evidence="6">
    <location>
        <begin position="81"/>
        <end position="83"/>
    </location>
</feature>
<feature type="chain" id="PRO_0000022865" description="Mojave toxin acidic chain B" evidence="2 3">
    <location>
        <begin position="84"/>
        <end position="119"/>
    </location>
</feature>
<feature type="propeptide" id="PRO_0000022866" evidence="6">
    <location>
        <begin position="120"/>
        <end position="126"/>
    </location>
</feature>
<feature type="chain" id="PRO_0000022867" description="Mojave toxin acidic chain C" evidence="2 3">
    <location>
        <begin position="127"/>
        <end position="138"/>
    </location>
</feature>
<feature type="modified residue" description="Pyrrolidone carboxylic acid" evidence="2">
    <location>
        <position position="84"/>
    </location>
</feature>
<feature type="disulfide bond" evidence="5">
    <location>
        <begin position="42"/>
        <end position="131"/>
    </location>
</feature>
<feature type="disulfide bond" evidence="5">
    <location>
        <begin position="44"/>
        <end position="60"/>
    </location>
</feature>
<feature type="disulfide bond" evidence="5">
    <location>
        <begin position="59"/>
        <end position="111"/>
    </location>
</feature>
<feature type="disulfide bond" evidence="5">
    <location>
        <begin position="65"/>
        <end position="138"/>
    </location>
</feature>
<feature type="disulfide bond" evidence="5">
    <location>
        <begin position="66"/>
        <end position="104"/>
    </location>
</feature>
<feature type="disulfide bond" evidence="5">
    <location>
        <begin position="73"/>
        <end position="97"/>
    </location>
</feature>
<feature type="disulfide bond" evidence="5">
    <location>
        <begin position="91"/>
        <end position="102"/>
    </location>
</feature>
<feature type="sequence conflict" description="In Ref. 2; AA sequence and 3; AA sequence." evidence="5" ref="2 3">
    <original>Q</original>
    <variation>E</variation>
    <location>
        <position position="84"/>
    </location>
</feature>
<keyword id="KW-0903">Direct protein sequencing</keyword>
<keyword id="KW-1015">Disulfide bond</keyword>
<keyword id="KW-0528">Neurotoxin</keyword>
<keyword id="KW-0638">Presynaptic neurotoxin</keyword>
<keyword id="KW-0873">Pyrrolidone carboxylic acid</keyword>
<keyword id="KW-0964">Secreted</keyword>
<keyword id="KW-0732">Signal</keyword>
<keyword id="KW-0800">Toxin</keyword>